<name>COBT_SHEB8</name>
<gene>
    <name evidence="1" type="primary">cobT</name>
    <name type="ordered locus">Shew185_0977</name>
</gene>
<accession>A6WJZ1</accession>
<keyword id="KW-0169">Cobalamin biosynthesis</keyword>
<keyword id="KW-0328">Glycosyltransferase</keyword>
<keyword id="KW-0808">Transferase</keyword>
<sequence>MSQSAVSFQISPVSKAQDPLIQQKIDLKTKPPGALGQLESLALQIARVQATDSQQADQPQNTVLKIVHPTMLVFAGDHGIVAEGVSIAPSEVTRQMVQNFAHGGAAINVFCRQVGFKLEVIDCGILTPVEGVEGIIDQRLGAGTGAIHLEPAMALETVDKGFAMARDLIERHHQAGCNLVAFGEMGIGNTSAAAAIMAAIMQLDVIDCVGRGTGINSETLERKLMLIELALLLHQSALTGPKSVLACLGGFEIVQMTGAMLAAAERKMLVVVDGFIATAAALVAVQIAPNVRDYLIFAHQSDEQGHQRMLEFLQAKPLLSLGLRLGEGTGAALALPLIQASVNFYNQMASFSDAGIEAVV</sequence>
<organism>
    <name type="scientific">Shewanella baltica (strain OS185)</name>
    <dbReference type="NCBI Taxonomy" id="402882"/>
    <lineage>
        <taxon>Bacteria</taxon>
        <taxon>Pseudomonadati</taxon>
        <taxon>Pseudomonadota</taxon>
        <taxon>Gammaproteobacteria</taxon>
        <taxon>Alteromonadales</taxon>
        <taxon>Shewanellaceae</taxon>
        <taxon>Shewanella</taxon>
    </lineage>
</organism>
<comment type="function">
    <text evidence="1">Catalyzes the synthesis of alpha-ribazole-5'-phosphate from nicotinate mononucleotide (NAMN) and 5,6-dimethylbenzimidazole (DMB).</text>
</comment>
<comment type="catalytic activity">
    <reaction evidence="1">
        <text>5,6-dimethylbenzimidazole + nicotinate beta-D-ribonucleotide = alpha-ribazole 5'-phosphate + nicotinate + H(+)</text>
        <dbReference type="Rhea" id="RHEA:11196"/>
        <dbReference type="ChEBI" id="CHEBI:15378"/>
        <dbReference type="ChEBI" id="CHEBI:15890"/>
        <dbReference type="ChEBI" id="CHEBI:32544"/>
        <dbReference type="ChEBI" id="CHEBI:57502"/>
        <dbReference type="ChEBI" id="CHEBI:57918"/>
        <dbReference type="EC" id="2.4.2.21"/>
    </reaction>
</comment>
<comment type="pathway">
    <text evidence="1">Nucleoside biosynthesis; alpha-ribazole biosynthesis; alpha-ribazole from 5,6-dimethylbenzimidazole: step 1/2.</text>
</comment>
<comment type="similarity">
    <text evidence="1">Belongs to the CobT family.</text>
</comment>
<feature type="chain" id="PRO_1000021626" description="Nicotinate-nucleotide--dimethylbenzimidazole phosphoribosyltransferase">
    <location>
        <begin position="1"/>
        <end position="360"/>
    </location>
</feature>
<feature type="active site" description="Proton acceptor" evidence="1">
    <location>
        <position position="327"/>
    </location>
</feature>
<reference key="1">
    <citation type="submission" date="2007-07" db="EMBL/GenBank/DDBJ databases">
        <title>Complete sequence of chromosome of Shewanella baltica OS185.</title>
        <authorList>
            <consortium name="US DOE Joint Genome Institute"/>
            <person name="Copeland A."/>
            <person name="Lucas S."/>
            <person name="Lapidus A."/>
            <person name="Barry K."/>
            <person name="Glavina del Rio T."/>
            <person name="Dalin E."/>
            <person name="Tice H."/>
            <person name="Pitluck S."/>
            <person name="Sims D."/>
            <person name="Brettin T."/>
            <person name="Bruce D."/>
            <person name="Detter J.C."/>
            <person name="Han C."/>
            <person name="Schmutz J."/>
            <person name="Larimer F."/>
            <person name="Land M."/>
            <person name="Hauser L."/>
            <person name="Kyrpides N."/>
            <person name="Mikhailova N."/>
            <person name="Brettar I."/>
            <person name="Rodrigues J."/>
            <person name="Konstantinidis K."/>
            <person name="Tiedje J."/>
            <person name="Richardson P."/>
        </authorList>
    </citation>
    <scope>NUCLEOTIDE SEQUENCE [LARGE SCALE GENOMIC DNA]</scope>
    <source>
        <strain>OS185</strain>
    </source>
</reference>
<evidence type="ECO:0000255" key="1">
    <source>
        <dbReference type="HAMAP-Rule" id="MF_00230"/>
    </source>
</evidence>
<proteinExistence type="inferred from homology"/>
<protein>
    <recommendedName>
        <fullName evidence="1">Nicotinate-nucleotide--dimethylbenzimidazole phosphoribosyltransferase</fullName>
        <shortName evidence="1">NN:DBI PRT</shortName>
        <ecNumber evidence="1">2.4.2.21</ecNumber>
    </recommendedName>
    <alternativeName>
        <fullName evidence="1">N(1)-alpha-phosphoribosyltransferase</fullName>
    </alternativeName>
</protein>
<dbReference type="EC" id="2.4.2.21" evidence="1"/>
<dbReference type="EMBL" id="CP000753">
    <property type="protein sequence ID" value="ABS07130.1"/>
    <property type="molecule type" value="Genomic_DNA"/>
</dbReference>
<dbReference type="RefSeq" id="WP_012088425.1">
    <property type="nucleotide sequence ID" value="NC_009665.1"/>
</dbReference>
<dbReference type="SMR" id="A6WJZ1"/>
<dbReference type="KEGG" id="sbm:Shew185_0977"/>
<dbReference type="HOGENOM" id="CLU_002982_0_0_6"/>
<dbReference type="UniPathway" id="UPA00061">
    <property type="reaction ID" value="UER00516"/>
</dbReference>
<dbReference type="GO" id="GO:0008939">
    <property type="term" value="F:nicotinate-nucleotide-dimethylbenzimidazole phosphoribosyltransferase activity"/>
    <property type="evidence" value="ECO:0007669"/>
    <property type="project" value="UniProtKB-UniRule"/>
</dbReference>
<dbReference type="GO" id="GO:0009236">
    <property type="term" value="P:cobalamin biosynthetic process"/>
    <property type="evidence" value="ECO:0007669"/>
    <property type="project" value="UniProtKB-KW"/>
</dbReference>
<dbReference type="CDD" id="cd02439">
    <property type="entry name" value="DMB-PRT_CobT"/>
    <property type="match status" value="1"/>
</dbReference>
<dbReference type="FunFam" id="3.40.50.10210:FF:000001">
    <property type="entry name" value="Nicotinate-nucleotide--dimethylbenzimidazole phosphoribosyltransferase"/>
    <property type="match status" value="1"/>
</dbReference>
<dbReference type="Gene3D" id="1.10.1610.10">
    <property type="match status" value="1"/>
</dbReference>
<dbReference type="Gene3D" id="3.40.50.10210">
    <property type="match status" value="1"/>
</dbReference>
<dbReference type="HAMAP" id="MF_00230">
    <property type="entry name" value="CobT"/>
    <property type="match status" value="1"/>
</dbReference>
<dbReference type="InterPro" id="IPR003200">
    <property type="entry name" value="Nict_dMeBzImd_PRibTrfase"/>
</dbReference>
<dbReference type="InterPro" id="IPR017846">
    <property type="entry name" value="Nict_dMeBzImd_PRibTrfase_bact"/>
</dbReference>
<dbReference type="InterPro" id="IPR023195">
    <property type="entry name" value="Nict_dMeBzImd_PRibTrfase_N"/>
</dbReference>
<dbReference type="InterPro" id="IPR036087">
    <property type="entry name" value="Nict_dMeBzImd_PRibTrfase_sf"/>
</dbReference>
<dbReference type="NCBIfam" id="TIGR03160">
    <property type="entry name" value="cobT_DBIPRT"/>
    <property type="match status" value="1"/>
</dbReference>
<dbReference type="NCBIfam" id="NF000996">
    <property type="entry name" value="PRK00105.1"/>
    <property type="match status" value="1"/>
</dbReference>
<dbReference type="PANTHER" id="PTHR43463">
    <property type="entry name" value="NICOTINATE-NUCLEOTIDE--DIMETHYLBENZIMIDAZOLE PHOSPHORIBOSYLTRANSFERASE"/>
    <property type="match status" value="1"/>
</dbReference>
<dbReference type="PANTHER" id="PTHR43463:SF1">
    <property type="entry name" value="NICOTINATE-NUCLEOTIDE--DIMETHYLBENZIMIDAZOLE PHOSPHORIBOSYLTRANSFERASE"/>
    <property type="match status" value="1"/>
</dbReference>
<dbReference type="Pfam" id="PF02277">
    <property type="entry name" value="DBI_PRT"/>
    <property type="match status" value="1"/>
</dbReference>
<dbReference type="SUPFAM" id="SSF52733">
    <property type="entry name" value="Nicotinate mononucleotide:5,6-dimethylbenzimidazole phosphoribosyltransferase (CobT)"/>
    <property type="match status" value="1"/>
</dbReference>